<dbReference type="EC" id="6.2.1.5" evidence="1"/>
<dbReference type="EMBL" id="AE010300">
    <property type="protein sequence ID" value="AAN48301.1"/>
    <property type="molecule type" value="Genomic_DNA"/>
</dbReference>
<dbReference type="RefSeq" id="NP_711283.1">
    <property type="nucleotide sequence ID" value="NC_004342.2"/>
</dbReference>
<dbReference type="RefSeq" id="WP_000690686.1">
    <property type="nucleotide sequence ID" value="NC_004342.2"/>
</dbReference>
<dbReference type="SMR" id="Q8F746"/>
<dbReference type="FunCoup" id="Q8F746">
    <property type="interactions" value="470"/>
</dbReference>
<dbReference type="STRING" id="189518.LA_1102"/>
<dbReference type="PaxDb" id="189518-LA_1102"/>
<dbReference type="EnsemblBacteria" id="AAN48301">
    <property type="protein sequence ID" value="AAN48301"/>
    <property type="gene ID" value="LA_1102"/>
</dbReference>
<dbReference type="GeneID" id="61142451"/>
<dbReference type="KEGG" id="lil:LA_1102"/>
<dbReference type="PATRIC" id="fig|189518.3.peg.1095"/>
<dbReference type="HOGENOM" id="CLU_037430_0_2_12"/>
<dbReference type="InParanoid" id="Q8F746"/>
<dbReference type="OrthoDB" id="9802602at2"/>
<dbReference type="UniPathway" id="UPA00223">
    <property type="reaction ID" value="UER00999"/>
</dbReference>
<dbReference type="Proteomes" id="UP000001408">
    <property type="component" value="Chromosome I"/>
</dbReference>
<dbReference type="GO" id="GO:0005829">
    <property type="term" value="C:cytosol"/>
    <property type="evidence" value="ECO:0000318"/>
    <property type="project" value="GO_Central"/>
</dbReference>
<dbReference type="GO" id="GO:0042709">
    <property type="term" value="C:succinate-CoA ligase complex"/>
    <property type="evidence" value="ECO:0000318"/>
    <property type="project" value="GO_Central"/>
</dbReference>
<dbReference type="GO" id="GO:0005524">
    <property type="term" value="F:ATP binding"/>
    <property type="evidence" value="ECO:0007669"/>
    <property type="project" value="UniProtKB-UniRule"/>
</dbReference>
<dbReference type="GO" id="GO:0000287">
    <property type="term" value="F:magnesium ion binding"/>
    <property type="evidence" value="ECO:0007669"/>
    <property type="project" value="UniProtKB-UniRule"/>
</dbReference>
<dbReference type="GO" id="GO:0004775">
    <property type="term" value="F:succinate-CoA ligase (ADP-forming) activity"/>
    <property type="evidence" value="ECO:0000318"/>
    <property type="project" value="GO_Central"/>
</dbReference>
<dbReference type="GO" id="GO:0004776">
    <property type="term" value="F:succinate-CoA ligase (GDP-forming) activity"/>
    <property type="evidence" value="ECO:0007669"/>
    <property type="project" value="RHEA"/>
</dbReference>
<dbReference type="GO" id="GO:0006104">
    <property type="term" value="P:succinyl-CoA metabolic process"/>
    <property type="evidence" value="ECO:0000318"/>
    <property type="project" value="GO_Central"/>
</dbReference>
<dbReference type="GO" id="GO:0006099">
    <property type="term" value="P:tricarboxylic acid cycle"/>
    <property type="evidence" value="ECO:0000318"/>
    <property type="project" value="GO_Central"/>
</dbReference>
<dbReference type="FunFam" id="3.30.1490.20:FF:000002">
    <property type="entry name" value="Succinate--CoA ligase [ADP-forming] subunit beta"/>
    <property type="match status" value="1"/>
</dbReference>
<dbReference type="FunFam" id="3.30.470.20:FF:000002">
    <property type="entry name" value="Succinate--CoA ligase [ADP-forming] subunit beta"/>
    <property type="match status" value="1"/>
</dbReference>
<dbReference type="FunFam" id="3.40.50.261:FF:000001">
    <property type="entry name" value="Succinate--CoA ligase [ADP-forming] subunit beta"/>
    <property type="match status" value="1"/>
</dbReference>
<dbReference type="Gene3D" id="3.30.1490.20">
    <property type="entry name" value="ATP-grasp fold, A domain"/>
    <property type="match status" value="1"/>
</dbReference>
<dbReference type="Gene3D" id="3.30.470.20">
    <property type="entry name" value="ATP-grasp fold, B domain"/>
    <property type="match status" value="1"/>
</dbReference>
<dbReference type="Gene3D" id="3.40.50.261">
    <property type="entry name" value="Succinyl-CoA synthetase domains"/>
    <property type="match status" value="1"/>
</dbReference>
<dbReference type="HAMAP" id="MF_00558">
    <property type="entry name" value="Succ_CoA_beta"/>
    <property type="match status" value="1"/>
</dbReference>
<dbReference type="InterPro" id="IPR011761">
    <property type="entry name" value="ATP-grasp"/>
</dbReference>
<dbReference type="InterPro" id="IPR013650">
    <property type="entry name" value="ATP-grasp_succ-CoA_synth-type"/>
</dbReference>
<dbReference type="InterPro" id="IPR013815">
    <property type="entry name" value="ATP_grasp_subdomain_1"/>
</dbReference>
<dbReference type="InterPro" id="IPR017866">
    <property type="entry name" value="Succ-CoA_synthase_bsu_CS"/>
</dbReference>
<dbReference type="InterPro" id="IPR005811">
    <property type="entry name" value="SUCC_ACL_C"/>
</dbReference>
<dbReference type="InterPro" id="IPR005809">
    <property type="entry name" value="Succ_CoA_ligase-like_bsu"/>
</dbReference>
<dbReference type="InterPro" id="IPR016102">
    <property type="entry name" value="Succinyl-CoA_synth-like"/>
</dbReference>
<dbReference type="NCBIfam" id="NF001913">
    <property type="entry name" value="PRK00696.1"/>
    <property type="match status" value="1"/>
</dbReference>
<dbReference type="NCBIfam" id="TIGR01016">
    <property type="entry name" value="sucCoAbeta"/>
    <property type="match status" value="1"/>
</dbReference>
<dbReference type="PANTHER" id="PTHR11815:SF10">
    <property type="entry name" value="SUCCINATE--COA LIGASE [GDP-FORMING] SUBUNIT BETA, MITOCHONDRIAL"/>
    <property type="match status" value="1"/>
</dbReference>
<dbReference type="PANTHER" id="PTHR11815">
    <property type="entry name" value="SUCCINYL-COA SYNTHETASE BETA CHAIN"/>
    <property type="match status" value="1"/>
</dbReference>
<dbReference type="Pfam" id="PF08442">
    <property type="entry name" value="ATP-grasp_2"/>
    <property type="match status" value="1"/>
</dbReference>
<dbReference type="Pfam" id="PF00549">
    <property type="entry name" value="Ligase_CoA"/>
    <property type="match status" value="1"/>
</dbReference>
<dbReference type="PIRSF" id="PIRSF001554">
    <property type="entry name" value="SucCS_beta"/>
    <property type="match status" value="1"/>
</dbReference>
<dbReference type="SUPFAM" id="SSF56059">
    <property type="entry name" value="Glutathione synthetase ATP-binding domain-like"/>
    <property type="match status" value="1"/>
</dbReference>
<dbReference type="SUPFAM" id="SSF52210">
    <property type="entry name" value="Succinyl-CoA synthetase domains"/>
    <property type="match status" value="1"/>
</dbReference>
<dbReference type="PROSITE" id="PS50975">
    <property type="entry name" value="ATP_GRASP"/>
    <property type="match status" value="1"/>
</dbReference>
<dbReference type="PROSITE" id="PS01217">
    <property type="entry name" value="SUCCINYL_COA_LIG_3"/>
    <property type="match status" value="1"/>
</dbReference>
<gene>
    <name evidence="1" type="primary">sucC</name>
    <name type="ordered locus">LA_1102</name>
</gene>
<name>SUCC_LEPIN</name>
<sequence length="390" mass="41890">MKIHEYQAKEILRRHKANVPFGVVIDKKENASKAHDEVTSKTGGSVVVVKAQIHAGGRGKGGGVKVTKTKEDAIAAVDKILGMQLITPQTGPEGKKVLKVYLEQGIDIAKEYYLSILLDRSIRKTIIMASTEGGMEIEEVAETHPEKILKIAIDPGIGLQVNQARQLAFELGLPAESHKSFQSLLAAIYEAYIKEDASLLEINPLILTKQNEIIAGDCKIDLDENALYRHADNAAFRDITEEDPLEVQASEFNLNYVKLDGNIGCMVNGAGLAMATMDIVKLAGAEPANFLDVGGGANKTTVTNGFKIILGDPNVKGIFVNIFGGIVRCDMVAEGIIEAAKAVDLKVPLVVRLQGTNSELGREVLNKSGLKITGVDDLREAASTIAKLIG</sequence>
<organism>
    <name type="scientific">Leptospira interrogans serogroup Icterohaemorrhagiae serovar Lai (strain 56601)</name>
    <dbReference type="NCBI Taxonomy" id="189518"/>
    <lineage>
        <taxon>Bacteria</taxon>
        <taxon>Pseudomonadati</taxon>
        <taxon>Spirochaetota</taxon>
        <taxon>Spirochaetia</taxon>
        <taxon>Leptospirales</taxon>
        <taxon>Leptospiraceae</taxon>
        <taxon>Leptospira</taxon>
    </lineage>
</organism>
<reference key="1">
    <citation type="journal article" date="2003" name="Nature">
        <title>Unique physiological and pathogenic features of Leptospira interrogans revealed by whole-genome sequencing.</title>
        <authorList>
            <person name="Ren S.-X."/>
            <person name="Fu G."/>
            <person name="Jiang X.-G."/>
            <person name="Zeng R."/>
            <person name="Miao Y.-G."/>
            <person name="Xu H."/>
            <person name="Zhang Y.-X."/>
            <person name="Xiong H."/>
            <person name="Lu G."/>
            <person name="Lu L.-F."/>
            <person name="Jiang H.-Q."/>
            <person name="Jia J."/>
            <person name="Tu Y.-F."/>
            <person name="Jiang J.-X."/>
            <person name="Gu W.-Y."/>
            <person name="Zhang Y.-Q."/>
            <person name="Cai Z."/>
            <person name="Sheng H.-H."/>
            <person name="Yin H.-F."/>
            <person name="Zhang Y."/>
            <person name="Zhu G.-F."/>
            <person name="Wan M."/>
            <person name="Huang H.-L."/>
            <person name="Qian Z."/>
            <person name="Wang S.-Y."/>
            <person name="Ma W."/>
            <person name="Yao Z.-J."/>
            <person name="Shen Y."/>
            <person name="Qiang B.-Q."/>
            <person name="Xia Q.-C."/>
            <person name="Guo X.-K."/>
            <person name="Danchin A."/>
            <person name="Saint Girons I."/>
            <person name="Somerville R.L."/>
            <person name="Wen Y.-M."/>
            <person name="Shi M.-H."/>
            <person name="Chen Z."/>
            <person name="Xu J.-G."/>
            <person name="Zhao G.-P."/>
        </authorList>
    </citation>
    <scope>NUCLEOTIDE SEQUENCE [LARGE SCALE GENOMIC DNA]</scope>
    <source>
        <strain>56601</strain>
    </source>
</reference>
<keyword id="KW-0067">ATP-binding</keyword>
<keyword id="KW-0436">Ligase</keyword>
<keyword id="KW-0460">Magnesium</keyword>
<keyword id="KW-0479">Metal-binding</keyword>
<keyword id="KW-0547">Nucleotide-binding</keyword>
<keyword id="KW-1185">Reference proteome</keyword>
<keyword id="KW-0816">Tricarboxylic acid cycle</keyword>
<protein>
    <recommendedName>
        <fullName evidence="1">Succinate--CoA ligase [ADP-forming] subunit beta</fullName>
        <ecNumber evidence="1">6.2.1.5</ecNumber>
    </recommendedName>
    <alternativeName>
        <fullName evidence="1">Succinyl-CoA synthetase subunit beta</fullName>
        <shortName evidence="1">SCS-beta</shortName>
    </alternativeName>
</protein>
<accession>Q8F746</accession>
<comment type="function">
    <text evidence="1">Succinyl-CoA synthetase functions in the citric acid cycle (TCA), coupling the hydrolysis of succinyl-CoA to the synthesis of either ATP or GTP and thus represents the only step of substrate-level phosphorylation in the TCA. The beta subunit provides nucleotide specificity of the enzyme and binds the substrate succinate, while the binding sites for coenzyme A and phosphate are found in the alpha subunit.</text>
</comment>
<comment type="catalytic activity">
    <reaction evidence="1">
        <text>succinate + ATP + CoA = succinyl-CoA + ADP + phosphate</text>
        <dbReference type="Rhea" id="RHEA:17661"/>
        <dbReference type="ChEBI" id="CHEBI:30031"/>
        <dbReference type="ChEBI" id="CHEBI:30616"/>
        <dbReference type="ChEBI" id="CHEBI:43474"/>
        <dbReference type="ChEBI" id="CHEBI:57287"/>
        <dbReference type="ChEBI" id="CHEBI:57292"/>
        <dbReference type="ChEBI" id="CHEBI:456216"/>
        <dbReference type="EC" id="6.2.1.5"/>
    </reaction>
    <physiologicalReaction direction="right-to-left" evidence="1">
        <dbReference type="Rhea" id="RHEA:17663"/>
    </physiologicalReaction>
</comment>
<comment type="catalytic activity">
    <reaction evidence="1">
        <text>GTP + succinate + CoA = succinyl-CoA + GDP + phosphate</text>
        <dbReference type="Rhea" id="RHEA:22120"/>
        <dbReference type="ChEBI" id="CHEBI:30031"/>
        <dbReference type="ChEBI" id="CHEBI:37565"/>
        <dbReference type="ChEBI" id="CHEBI:43474"/>
        <dbReference type="ChEBI" id="CHEBI:57287"/>
        <dbReference type="ChEBI" id="CHEBI:57292"/>
        <dbReference type="ChEBI" id="CHEBI:58189"/>
    </reaction>
    <physiologicalReaction direction="right-to-left" evidence="1">
        <dbReference type="Rhea" id="RHEA:22122"/>
    </physiologicalReaction>
</comment>
<comment type="cofactor">
    <cofactor evidence="1">
        <name>Mg(2+)</name>
        <dbReference type="ChEBI" id="CHEBI:18420"/>
    </cofactor>
    <text evidence="1">Binds 1 Mg(2+) ion per subunit.</text>
</comment>
<comment type="pathway">
    <text evidence="1">Carbohydrate metabolism; tricarboxylic acid cycle; succinate from succinyl-CoA (ligase route): step 1/1.</text>
</comment>
<comment type="subunit">
    <text evidence="1">Heterotetramer of two alpha and two beta subunits.</text>
</comment>
<comment type="similarity">
    <text evidence="1">Belongs to the succinate/malate CoA ligase beta subunit family.</text>
</comment>
<proteinExistence type="inferred from homology"/>
<feature type="chain" id="PRO_0000102837" description="Succinate--CoA ligase [ADP-forming] subunit beta">
    <location>
        <begin position="1"/>
        <end position="390"/>
    </location>
</feature>
<feature type="domain" description="ATP-grasp" evidence="1">
    <location>
        <begin position="9"/>
        <end position="248"/>
    </location>
</feature>
<feature type="binding site" evidence="1">
    <location>
        <position position="50"/>
    </location>
    <ligand>
        <name>ATP</name>
        <dbReference type="ChEBI" id="CHEBI:30616"/>
    </ligand>
</feature>
<feature type="binding site" evidence="1">
    <location>
        <begin position="57"/>
        <end position="59"/>
    </location>
    <ligand>
        <name>ATP</name>
        <dbReference type="ChEBI" id="CHEBI:30616"/>
    </ligand>
</feature>
<feature type="binding site" evidence="1">
    <location>
        <position position="103"/>
    </location>
    <ligand>
        <name>ATP</name>
        <dbReference type="ChEBI" id="CHEBI:30616"/>
    </ligand>
</feature>
<feature type="binding site" evidence="1">
    <location>
        <position position="106"/>
    </location>
    <ligand>
        <name>ATP</name>
        <dbReference type="ChEBI" id="CHEBI:30616"/>
    </ligand>
</feature>
<feature type="binding site" evidence="1">
    <location>
        <position position="111"/>
    </location>
    <ligand>
        <name>ATP</name>
        <dbReference type="ChEBI" id="CHEBI:30616"/>
    </ligand>
</feature>
<feature type="binding site" evidence="1">
    <location>
        <position position="203"/>
    </location>
    <ligand>
        <name>Mg(2+)</name>
        <dbReference type="ChEBI" id="CHEBI:18420"/>
    </ligand>
</feature>
<feature type="binding site" evidence="1">
    <location>
        <position position="217"/>
    </location>
    <ligand>
        <name>Mg(2+)</name>
        <dbReference type="ChEBI" id="CHEBI:18420"/>
    </ligand>
</feature>
<feature type="binding site" evidence="1">
    <location>
        <position position="268"/>
    </location>
    <ligand>
        <name>substrate</name>
        <note>ligand shared with subunit alpha</note>
    </ligand>
</feature>
<feature type="binding site" evidence="1">
    <location>
        <begin position="325"/>
        <end position="327"/>
    </location>
    <ligand>
        <name>substrate</name>
        <note>ligand shared with subunit alpha</note>
    </ligand>
</feature>
<evidence type="ECO:0000255" key="1">
    <source>
        <dbReference type="HAMAP-Rule" id="MF_00558"/>
    </source>
</evidence>